<dbReference type="EC" id="2.8.1.8" evidence="2 4 5"/>
<dbReference type="EMBL" id="AB007987">
    <property type="protein sequence ID" value="BAA34701.1"/>
    <property type="molecule type" value="mRNA"/>
</dbReference>
<dbReference type="EMBL" id="AC006234">
    <property type="protein sequence ID" value="AAD20909.1"/>
    <property type="molecule type" value="Genomic_DNA"/>
</dbReference>
<dbReference type="EMBL" id="CP002685">
    <property type="protein sequence ID" value="AEC07088.1"/>
    <property type="molecule type" value="Genomic_DNA"/>
</dbReference>
<dbReference type="EMBL" id="CP002685">
    <property type="protein sequence ID" value="ANM61393.1"/>
    <property type="molecule type" value="Genomic_DNA"/>
</dbReference>
<dbReference type="EMBL" id="CP002685">
    <property type="protein sequence ID" value="ANM61394.1"/>
    <property type="molecule type" value="Genomic_DNA"/>
</dbReference>
<dbReference type="EMBL" id="AY035143">
    <property type="protein sequence ID" value="AAK59647.1"/>
    <property type="molecule type" value="mRNA"/>
</dbReference>
<dbReference type="EMBL" id="AF424583">
    <property type="protein sequence ID" value="AAL11577.1"/>
    <property type="molecule type" value="mRNA"/>
</dbReference>
<dbReference type="EMBL" id="AY059077">
    <property type="protein sequence ID" value="AAL15183.1"/>
    <property type="molecule type" value="mRNA"/>
</dbReference>
<dbReference type="PIR" id="T44259">
    <property type="entry name" value="T44259"/>
</dbReference>
<dbReference type="RefSeq" id="NP_001318257.1">
    <property type="nucleotide sequence ID" value="NM_001335714.1"/>
</dbReference>
<dbReference type="RefSeq" id="NP_001323612.1">
    <property type="nucleotide sequence ID" value="NM_001335715.1"/>
</dbReference>
<dbReference type="RefSeq" id="NP_179682.1">
    <property type="nucleotide sequence ID" value="NM_127655.4"/>
</dbReference>
<dbReference type="SMR" id="Q9ZWT1"/>
<dbReference type="FunCoup" id="Q9ZWT1">
    <property type="interactions" value="1105"/>
</dbReference>
<dbReference type="STRING" id="3702.Q9ZWT1"/>
<dbReference type="iPTMnet" id="Q9ZWT1"/>
<dbReference type="PaxDb" id="3702-AT2G20860.1"/>
<dbReference type="ProteomicsDB" id="238459"/>
<dbReference type="EnsemblPlants" id="AT2G20860.1">
    <property type="protein sequence ID" value="AT2G20860.1"/>
    <property type="gene ID" value="AT2G20860"/>
</dbReference>
<dbReference type="EnsemblPlants" id="AT2G20860.2">
    <property type="protein sequence ID" value="AT2G20860.2"/>
    <property type="gene ID" value="AT2G20860"/>
</dbReference>
<dbReference type="EnsemblPlants" id="AT2G20860.3">
    <property type="protein sequence ID" value="AT2G20860.3"/>
    <property type="gene ID" value="AT2G20860"/>
</dbReference>
<dbReference type="GeneID" id="816619"/>
<dbReference type="Gramene" id="AT2G20860.1">
    <property type="protein sequence ID" value="AT2G20860.1"/>
    <property type="gene ID" value="AT2G20860"/>
</dbReference>
<dbReference type="Gramene" id="AT2G20860.2">
    <property type="protein sequence ID" value="AT2G20860.2"/>
    <property type="gene ID" value="AT2G20860"/>
</dbReference>
<dbReference type="Gramene" id="AT2G20860.3">
    <property type="protein sequence ID" value="AT2G20860.3"/>
    <property type="gene ID" value="AT2G20860"/>
</dbReference>
<dbReference type="KEGG" id="ath:AT2G20860"/>
<dbReference type="Araport" id="AT2G20860"/>
<dbReference type="TAIR" id="AT2G20860">
    <property type="gene designation" value="LIP1"/>
</dbReference>
<dbReference type="eggNOG" id="KOG2672">
    <property type="taxonomic scope" value="Eukaryota"/>
</dbReference>
<dbReference type="HOGENOM" id="CLU_033144_1_0_1"/>
<dbReference type="InParanoid" id="Q9ZWT1"/>
<dbReference type="OMA" id="PYCDIDF"/>
<dbReference type="OrthoDB" id="3231at2759"/>
<dbReference type="PhylomeDB" id="Q9ZWT1"/>
<dbReference type="BRENDA" id="2.8.1.8">
    <property type="organism ID" value="399"/>
</dbReference>
<dbReference type="UniPathway" id="UPA00538">
    <property type="reaction ID" value="UER00593"/>
</dbReference>
<dbReference type="PRO" id="PR:Q9ZWT1"/>
<dbReference type="Proteomes" id="UP000006548">
    <property type="component" value="Chromosome 2"/>
</dbReference>
<dbReference type="ExpressionAtlas" id="Q9ZWT1">
    <property type="expression patterns" value="baseline and differential"/>
</dbReference>
<dbReference type="GO" id="GO:0005759">
    <property type="term" value="C:mitochondrial matrix"/>
    <property type="evidence" value="ECO:0000314"/>
    <property type="project" value="TAIR"/>
</dbReference>
<dbReference type="GO" id="GO:0051539">
    <property type="term" value="F:4 iron, 4 sulfur cluster binding"/>
    <property type="evidence" value="ECO:0007669"/>
    <property type="project" value="UniProtKB-UniRule"/>
</dbReference>
<dbReference type="GO" id="GO:0016992">
    <property type="term" value="F:lipoate synthase activity"/>
    <property type="evidence" value="ECO:0007669"/>
    <property type="project" value="UniProtKB-UniRule"/>
</dbReference>
<dbReference type="GO" id="GO:0046872">
    <property type="term" value="F:metal ion binding"/>
    <property type="evidence" value="ECO:0007669"/>
    <property type="project" value="UniProtKB-KW"/>
</dbReference>
<dbReference type="GO" id="GO:0006546">
    <property type="term" value="P:glycine catabolic process"/>
    <property type="evidence" value="ECO:0000304"/>
    <property type="project" value="TAIR"/>
</dbReference>
<dbReference type="CDD" id="cd01335">
    <property type="entry name" value="Radical_SAM"/>
    <property type="match status" value="1"/>
</dbReference>
<dbReference type="FunFam" id="3.20.20.70:FF:000125">
    <property type="entry name" value="Lipoyl synthase, mitochondrial"/>
    <property type="match status" value="1"/>
</dbReference>
<dbReference type="Gene3D" id="3.20.20.70">
    <property type="entry name" value="Aldolase class I"/>
    <property type="match status" value="1"/>
</dbReference>
<dbReference type="HAMAP" id="MF_00206">
    <property type="entry name" value="Lipoyl_synth"/>
    <property type="match status" value="1"/>
</dbReference>
<dbReference type="HAMAP" id="MF_03128">
    <property type="entry name" value="Lipoyl_synth_plantM"/>
    <property type="match status" value="1"/>
</dbReference>
<dbReference type="InterPro" id="IPR013785">
    <property type="entry name" value="Aldolase_TIM"/>
</dbReference>
<dbReference type="InterPro" id="IPR006638">
    <property type="entry name" value="Elp3/MiaA/NifB-like_rSAM"/>
</dbReference>
<dbReference type="InterPro" id="IPR031691">
    <property type="entry name" value="LIAS_N"/>
</dbReference>
<dbReference type="InterPro" id="IPR003698">
    <property type="entry name" value="Lipoyl_synth"/>
</dbReference>
<dbReference type="InterPro" id="IPR027527">
    <property type="entry name" value="Lipoyl_synth_mt"/>
</dbReference>
<dbReference type="InterPro" id="IPR007197">
    <property type="entry name" value="rSAM"/>
</dbReference>
<dbReference type="NCBIfam" id="TIGR00510">
    <property type="entry name" value="lipA"/>
    <property type="match status" value="1"/>
</dbReference>
<dbReference type="NCBIfam" id="NF004019">
    <property type="entry name" value="PRK05481.1"/>
    <property type="match status" value="1"/>
</dbReference>
<dbReference type="NCBIfam" id="NF009544">
    <property type="entry name" value="PRK12928.1"/>
    <property type="match status" value="1"/>
</dbReference>
<dbReference type="PANTHER" id="PTHR10949">
    <property type="entry name" value="LIPOYL SYNTHASE"/>
    <property type="match status" value="1"/>
</dbReference>
<dbReference type="PANTHER" id="PTHR10949:SF0">
    <property type="entry name" value="LIPOYL SYNTHASE, MITOCHONDRIAL"/>
    <property type="match status" value="1"/>
</dbReference>
<dbReference type="Pfam" id="PF16881">
    <property type="entry name" value="LIAS_N"/>
    <property type="match status" value="1"/>
</dbReference>
<dbReference type="Pfam" id="PF04055">
    <property type="entry name" value="Radical_SAM"/>
    <property type="match status" value="1"/>
</dbReference>
<dbReference type="PIRSF" id="PIRSF005963">
    <property type="entry name" value="Lipoyl_synth"/>
    <property type="match status" value="1"/>
</dbReference>
<dbReference type="SFLD" id="SFLDF00271">
    <property type="entry name" value="lipoyl_synthase"/>
    <property type="match status" value="1"/>
</dbReference>
<dbReference type="SFLD" id="SFLDG01058">
    <property type="entry name" value="lipoyl_synthase_like"/>
    <property type="match status" value="1"/>
</dbReference>
<dbReference type="SMART" id="SM00729">
    <property type="entry name" value="Elp3"/>
    <property type="match status" value="1"/>
</dbReference>
<dbReference type="SUPFAM" id="SSF102114">
    <property type="entry name" value="Radical SAM enzymes"/>
    <property type="match status" value="1"/>
</dbReference>
<dbReference type="PROSITE" id="PS51918">
    <property type="entry name" value="RADICAL_SAM"/>
    <property type="match status" value="1"/>
</dbReference>
<organism>
    <name type="scientific">Arabidopsis thaliana</name>
    <name type="common">Mouse-ear cress</name>
    <dbReference type="NCBI Taxonomy" id="3702"/>
    <lineage>
        <taxon>Eukaryota</taxon>
        <taxon>Viridiplantae</taxon>
        <taxon>Streptophyta</taxon>
        <taxon>Embryophyta</taxon>
        <taxon>Tracheophyta</taxon>
        <taxon>Spermatophyta</taxon>
        <taxon>Magnoliopsida</taxon>
        <taxon>eudicotyledons</taxon>
        <taxon>Gunneridae</taxon>
        <taxon>Pentapetalae</taxon>
        <taxon>rosids</taxon>
        <taxon>malvids</taxon>
        <taxon>Brassicales</taxon>
        <taxon>Brassicaceae</taxon>
        <taxon>Camelineae</taxon>
        <taxon>Arabidopsis</taxon>
    </lineage>
</organism>
<reference key="1">
    <citation type="journal article" date="1998" name="Plant Physiol.">
        <title>Biosynthesis of lipoic acid in Arabidopsis: cloning and characterization of the cDNA for lipoic acid synthase.</title>
        <authorList>
            <person name="Yasuno R."/>
            <person name="Wada H."/>
        </authorList>
    </citation>
    <scope>NUCLEOTIDE SEQUENCE [MRNA]</scope>
    <scope>FUNCTION</scope>
    <scope>CATALYTIC ACTIVITY</scope>
    <scope>TISSUE SPECIFICITY</scope>
    <scope>SUBCELLULAR LOCATION</scope>
</reference>
<reference key="2">
    <citation type="journal article" date="1999" name="Nature">
        <title>Sequence and analysis of chromosome 2 of the plant Arabidopsis thaliana.</title>
        <authorList>
            <person name="Lin X."/>
            <person name="Kaul S."/>
            <person name="Rounsley S.D."/>
            <person name="Shea T.P."/>
            <person name="Benito M.-I."/>
            <person name="Town C.D."/>
            <person name="Fujii C.Y."/>
            <person name="Mason T.M."/>
            <person name="Bowman C.L."/>
            <person name="Barnstead M.E."/>
            <person name="Feldblyum T.V."/>
            <person name="Buell C.R."/>
            <person name="Ketchum K.A."/>
            <person name="Lee J.J."/>
            <person name="Ronning C.M."/>
            <person name="Koo H.L."/>
            <person name="Moffat K.S."/>
            <person name="Cronin L.A."/>
            <person name="Shen M."/>
            <person name="Pai G."/>
            <person name="Van Aken S."/>
            <person name="Umayam L."/>
            <person name="Tallon L.J."/>
            <person name="Gill J.E."/>
            <person name="Adams M.D."/>
            <person name="Carrera A.J."/>
            <person name="Creasy T.H."/>
            <person name="Goodman H.M."/>
            <person name="Somerville C.R."/>
            <person name="Copenhaver G.P."/>
            <person name="Preuss D."/>
            <person name="Nierman W.C."/>
            <person name="White O."/>
            <person name="Eisen J.A."/>
            <person name="Salzberg S.L."/>
            <person name="Fraser C.M."/>
            <person name="Venter J.C."/>
        </authorList>
    </citation>
    <scope>NUCLEOTIDE SEQUENCE [LARGE SCALE GENOMIC DNA]</scope>
    <source>
        <strain>cv. Columbia</strain>
    </source>
</reference>
<reference key="3">
    <citation type="journal article" date="2017" name="Plant J.">
        <title>Araport11: a complete reannotation of the Arabidopsis thaliana reference genome.</title>
        <authorList>
            <person name="Cheng C.Y."/>
            <person name="Krishnakumar V."/>
            <person name="Chan A.P."/>
            <person name="Thibaud-Nissen F."/>
            <person name="Schobel S."/>
            <person name="Town C.D."/>
        </authorList>
    </citation>
    <scope>GENOME REANNOTATION</scope>
    <source>
        <strain>cv. Columbia</strain>
    </source>
</reference>
<reference key="4">
    <citation type="journal article" date="2003" name="Science">
        <title>Empirical analysis of transcriptional activity in the Arabidopsis genome.</title>
        <authorList>
            <person name="Yamada K."/>
            <person name="Lim J."/>
            <person name="Dale J.M."/>
            <person name="Chen H."/>
            <person name="Shinn P."/>
            <person name="Palm C.J."/>
            <person name="Southwick A.M."/>
            <person name="Wu H.C."/>
            <person name="Kim C.J."/>
            <person name="Nguyen M."/>
            <person name="Pham P.K."/>
            <person name="Cheuk R.F."/>
            <person name="Karlin-Newmann G."/>
            <person name="Liu S.X."/>
            <person name="Lam B."/>
            <person name="Sakano H."/>
            <person name="Wu T."/>
            <person name="Yu G."/>
            <person name="Miranda M."/>
            <person name="Quach H.L."/>
            <person name="Tripp M."/>
            <person name="Chang C.H."/>
            <person name="Lee J.M."/>
            <person name="Toriumi M.J."/>
            <person name="Chan M.M."/>
            <person name="Tang C.C."/>
            <person name="Onodera C.S."/>
            <person name="Deng J.M."/>
            <person name="Akiyama K."/>
            <person name="Ansari Y."/>
            <person name="Arakawa T."/>
            <person name="Banh J."/>
            <person name="Banno F."/>
            <person name="Bowser L."/>
            <person name="Brooks S.Y."/>
            <person name="Carninci P."/>
            <person name="Chao Q."/>
            <person name="Choy N."/>
            <person name="Enju A."/>
            <person name="Goldsmith A.D."/>
            <person name="Gurjal M."/>
            <person name="Hansen N.F."/>
            <person name="Hayashizaki Y."/>
            <person name="Johnson-Hopson C."/>
            <person name="Hsuan V.W."/>
            <person name="Iida K."/>
            <person name="Karnes M."/>
            <person name="Khan S."/>
            <person name="Koesema E."/>
            <person name="Ishida J."/>
            <person name="Jiang P.X."/>
            <person name="Jones T."/>
            <person name="Kawai J."/>
            <person name="Kamiya A."/>
            <person name="Meyers C."/>
            <person name="Nakajima M."/>
            <person name="Narusaka M."/>
            <person name="Seki M."/>
            <person name="Sakurai T."/>
            <person name="Satou M."/>
            <person name="Tamse R."/>
            <person name="Vaysberg M."/>
            <person name="Wallender E.K."/>
            <person name="Wong C."/>
            <person name="Yamamura Y."/>
            <person name="Yuan S."/>
            <person name="Shinozaki K."/>
            <person name="Davis R.W."/>
            <person name="Theologis A."/>
            <person name="Ecker J.R."/>
        </authorList>
    </citation>
    <scope>NUCLEOTIDE SEQUENCE [LARGE SCALE MRNA]</scope>
    <source>
        <strain>cv. Columbia</strain>
    </source>
</reference>
<reference key="5">
    <citation type="journal article" date="2014" name="Plant Physiol.">
        <title>Lipoate-protein ligase and octanoyltransferase are essential for protein lipoylation in mitochondria of Arabidopsis.</title>
        <authorList>
            <person name="Ewald R."/>
            <person name="Hoffmann C."/>
            <person name="Florian A."/>
            <person name="Neuhaus E."/>
            <person name="Fernie A.R."/>
            <person name="Bauwe H."/>
        </authorList>
    </citation>
    <scope>FUNCTION</scope>
    <scope>CATALYTIC ACTIVITY</scope>
    <scope>SUBCELLULAR LOCATION</scope>
    <scope>TISSUE SPECIFICITY</scope>
    <scope>DISRUPTION PHENOTYPE</scope>
</reference>
<evidence type="ECO:0000250" key="1">
    <source>
        <dbReference type="UniProtKB" id="P9WK91"/>
    </source>
</evidence>
<evidence type="ECO:0000255" key="2">
    <source>
        <dbReference type="HAMAP-Rule" id="MF_03128"/>
    </source>
</evidence>
<evidence type="ECO:0000255" key="3">
    <source>
        <dbReference type="PROSITE-ProRule" id="PRU01266"/>
    </source>
</evidence>
<evidence type="ECO:0000269" key="4">
    <source>
    </source>
</evidence>
<evidence type="ECO:0000269" key="5">
    <source>
    </source>
</evidence>
<evidence type="ECO:0000303" key="6">
    <source>
    </source>
</evidence>
<evidence type="ECO:0000312" key="7">
    <source>
        <dbReference type="Araport" id="AT2G20860"/>
    </source>
</evidence>
<evidence type="ECO:0000312" key="8">
    <source>
        <dbReference type="EMBL" id="AAD20909.1"/>
    </source>
</evidence>
<sequence>MHSRSALLYRFLRPASRCFSSSSAVTPVTVTQSPKSLEALRARLANESPSLTDFIHGDTYSVEVGTKKKPLPKPKWMKESIPGGERYVQIKKKLRDLKLHTVCEEAKCPNLGECWSGGETGTATATIMILGDTCTRGCRFCNVKTSRTPPPPDPNEPNNVAEAIASWGVDYVVITSVDRDDLPDQGSGHFAETVQRLKFLKPEMLIEALVPDFRGDGGCVEKVSKSGLDVLAHNIETVEELQSFVRDHRANFKQSLDVLRMAKEYAPAGTLTKTSVMLGCGETPDQVVKTMEKVRAAGVDVMTFGQYMRPSKRHMPVAEYVTPDAFERYRLLGMEMGFRYVASGPMVRSSYKAGEYYIKSMIEADRVASPSTSP</sequence>
<feature type="transit peptide" description="Mitochondrion" evidence="2">
    <location>
        <begin position="1"/>
        <end position="19"/>
    </location>
</feature>
<feature type="chain" id="PRO_0000398844" description="Lipoyl synthase, mitochondrial">
    <location>
        <begin position="20"/>
        <end position="374"/>
    </location>
</feature>
<feature type="domain" description="Radical SAM core" evidence="3">
    <location>
        <begin position="119"/>
        <end position="339"/>
    </location>
</feature>
<feature type="binding site" evidence="1 2">
    <location>
        <position position="103"/>
    </location>
    <ligand>
        <name>[4Fe-4S] cluster</name>
        <dbReference type="ChEBI" id="CHEBI:49883"/>
        <label>1</label>
    </ligand>
</feature>
<feature type="binding site" evidence="1 2">
    <location>
        <position position="108"/>
    </location>
    <ligand>
        <name>[4Fe-4S] cluster</name>
        <dbReference type="ChEBI" id="CHEBI:49883"/>
        <label>1</label>
    </ligand>
</feature>
<feature type="binding site" evidence="1 2">
    <location>
        <position position="114"/>
    </location>
    <ligand>
        <name>[4Fe-4S] cluster</name>
        <dbReference type="ChEBI" id="CHEBI:49883"/>
        <label>1</label>
    </ligand>
</feature>
<feature type="binding site" evidence="1 2">
    <location>
        <position position="134"/>
    </location>
    <ligand>
        <name>[4Fe-4S] cluster</name>
        <dbReference type="ChEBI" id="CHEBI:49883"/>
        <label>2</label>
        <note>4Fe-4S-S-AdoMet</note>
    </ligand>
</feature>
<feature type="binding site" evidence="1 2">
    <location>
        <position position="138"/>
    </location>
    <ligand>
        <name>[4Fe-4S] cluster</name>
        <dbReference type="ChEBI" id="CHEBI:49883"/>
        <label>2</label>
        <note>4Fe-4S-S-AdoMet</note>
    </ligand>
</feature>
<feature type="binding site" evidence="1 2">
    <location>
        <position position="141"/>
    </location>
    <ligand>
        <name>[4Fe-4S] cluster</name>
        <dbReference type="ChEBI" id="CHEBI:49883"/>
        <label>2</label>
        <note>4Fe-4S-S-AdoMet</note>
    </ligand>
</feature>
<feature type="binding site" evidence="1 2">
    <location>
        <position position="350"/>
    </location>
    <ligand>
        <name>[4Fe-4S] cluster</name>
        <dbReference type="ChEBI" id="CHEBI:49883"/>
        <label>1</label>
    </ligand>
</feature>
<accession>Q9ZWT1</accession>
<keyword id="KW-0004">4Fe-4S</keyword>
<keyword id="KW-0408">Iron</keyword>
<keyword id="KW-0411">Iron-sulfur</keyword>
<keyword id="KW-0479">Metal-binding</keyword>
<keyword id="KW-0496">Mitochondrion</keyword>
<keyword id="KW-1185">Reference proteome</keyword>
<keyword id="KW-0949">S-adenosyl-L-methionine</keyword>
<keyword id="KW-0808">Transferase</keyword>
<keyword id="KW-0809">Transit peptide</keyword>
<comment type="function">
    <text evidence="2 4 5">Catalyzes the radical-mediated insertion of two sulfur atoms into the C-6 and C-8 positions of the octanoyl moiety bound to the lipoyl domains of lipoate-dependent enzymes, thereby converting the octanoylated domains into lipoylated derivatives (By similarity) (PubMed:24872381, PubMed:9808738). Together with LIP2 is essential for mitochondrial protein lipoylation during seed development. Required for the lipoylation of mitochondrial pyruvate dehydrogenase component E2 proteins in leaves and roots (PubMed:24872381).</text>
</comment>
<comment type="catalytic activity">
    <reaction evidence="2 4 5">
        <text>[[Fe-S] cluster scaffold protein carrying a second [4Fe-4S](2+) cluster] + N(6)-octanoyl-L-lysyl-[protein] + 2 oxidized [2Fe-2S]-[ferredoxin] + 2 S-adenosyl-L-methionine + 4 H(+) = [[Fe-S] cluster scaffold protein] + N(6)-[(R)-dihydrolipoyl]-L-lysyl-[protein] + 4 Fe(3+) + 2 hydrogen sulfide + 2 5'-deoxyadenosine + 2 L-methionine + 2 reduced [2Fe-2S]-[ferredoxin]</text>
        <dbReference type="Rhea" id="RHEA:16585"/>
        <dbReference type="Rhea" id="RHEA-COMP:9928"/>
        <dbReference type="Rhea" id="RHEA-COMP:10000"/>
        <dbReference type="Rhea" id="RHEA-COMP:10001"/>
        <dbReference type="Rhea" id="RHEA-COMP:10475"/>
        <dbReference type="Rhea" id="RHEA-COMP:14568"/>
        <dbReference type="Rhea" id="RHEA-COMP:14569"/>
        <dbReference type="ChEBI" id="CHEBI:15378"/>
        <dbReference type="ChEBI" id="CHEBI:17319"/>
        <dbReference type="ChEBI" id="CHEBI:29034"/>
        <dbReference type="ChEBI" id="CHEBI:29919"/>
        <dbReference type="ChEBI" id="CHEBI:33722"/>
        <dbReference type="ChEBI" id="CHEBI:33737"/>
        <dbReference type="ChEBI" id="CHEBI:33738"/>
        <dbReference type="ChEBI" id="CHEBI:57844"/>
        <dbReference type="ChEBI" id="CHEBI:59789"/>
        <dbReference type="ChEBI" id="CHEBI:78809"/>
        <dbReference type="ChEBI" id="CHEBI:83100"/>
        <dbReference type="EC" id="2.8.1.8"/>
    </reaction>
</comment>
<comment type="cofactor">
    <cofactor evidence="2">
        <name>[4Fe-4S] cluster</name>
        <dbReference type="ChEBI" id="CHEBI:49883"/>
    </cofactor>
    <text evidence="2">Binds 2 [4Fe-4S] clusters per subunit. One cluster is coordinated with 3 cysteines and an exchangeable S-adenosyl-L-methionine.</text>
</comment>
<comment type="pathway">
    <text evidence="2">Protein modification; protein lipoylation via endogenous pathway; protein N(6)-(lipoyl)lysine from octanoyl-[acyl-carrier-protein]: step 2/2.</text>
</comment>
<comment type="subcellular location">
    <subcellularLocation>
        <location evidence="2 4 5">Mitochondrion</location>
    </subcellularLocation>
</comment>
<comment type="tissue specificity">
    <text evidence="4 5">Expressed in leaves and flowers, but not in roots (PubMed:9808738). Expressed in roots, rosette leaves, cauline leaves, stems, flowers and siliques (PubMed:24872381).</text>
</comment>
<comment type="disruption phenotype">
    <text evidence="4">Embryonic lethality.</text>
</comment>
<comment type="similarity">
    <text evidence="2">Belongs to the radical SAM superfamily. Lipoyl synthase family.</text>
</comment>
<proteinExistence type="evidence at protein level"/>
<protein>
    <recommendedName>
        <fullName evidence="2">Lipoyl synthase, mitochondrial</fullName>
        <ecNumber evidence="2 4 5">2.8.1.8</ecNumber>
    </recommendedName>
    <alternativeName>
        <fullName evidence="2">Lipoate synthase</fullName>
        <shortName evidence="2">LS</shortName>
        <shortName evidence="2">Lip-syn</shortName>
    </alternativeName>
    <alternativeName>
        <fullName evidence="6">Lipoate-protein ligase</fullName>
        <shortName evidence="6">AtLPLA</shortName>
    </alternativeName>
    <alternativeName>
        <fullName evidence="2">Lipoic acid synthase</fullName>
    </alternativeName>
</protein>
<gene>
    <name evidence="2" type="primary">LIP1</name>
    <name evidence="6" type="synonym">LPLA</name>
    <name evidence="7" type="ordered locus">At2g20860</name>
    <name evidence="8" type="ORF">F5H14.17</name>
</gene>
<name>LIAS_ARATH</name>